<feature type="chain" id="PRO_0000145118" description="Translation initiation factor 1A 1">
    <location>
        <begin position="1"/>
        <end position="111"/>
    </location>
</feature>
<feature type="domain" description="S1-like">
    <location>
        <begin position="22"/>
        <end position="96"/>
    </location>
</feature>
<feature type="region of interest" description="Disordered" evidence="2">
    <location>
        <begin position="1"/>
        <end position="26"/>
    </location>
</feature>
<gene>
    <name type="primary">eIF1A1</name>
    <name type="ordered locus">MA_0895</name>
</gene>
<proteinExistence type="inferred from homology"/>
<sequence>MTLADLKKPTSRATPSTEETFTRVRTPRRENNEILATVESLLGANRLRLRCMDGVVRMGRIPGSMKKKTWIREGDVVIVVPWEFQNEKADVIWKYTRPQVDWLERKGYLKG</sequence>
<dbReference type="EMBL" id="AE010299">
    <property type="protein sequence ID" value="AAM04334.1"/>
    <property type="molecule type" value="Genomic_DNA"/>
</dbReference>
<dbReference type="SMR" id="Q8TSA3"/>
<dbReference type="FunCoup" id="Q8TSA3">
    <property type="interactions" value="130"/>
</dbReference>
<dbReference type="STRING" id="188937.MA_0895"/>
<dbReference type="EnsemblBacteria" id="AAM04334">
    <property type="protein sequence ID" value="AAM04334"/>
    <property type="gene ID" value="MA_0895"/>
</dbReference>
<dbReference type="KEGG" id="mac:MA_0895"/>
<dbReference type="HOGENOM" id="CLU_109098_1_2_2"/>
<dbReference type="InParanoid" id="Q8TSA3"/>
<dbReference type="PhylomeDB" id="Q8TSA3"/>
<dbReference type="Proteomes" id="UP000002487">
    <property type="component" value="Chromosome"/>
</dbReference>
<dbReference type="GO" id="GO:0005737">
    <property type="term" value="C:cytoplasm"/>
    <property type="evidence" value="ECO:0000318"/>
    <property type="project" value="GO_Central"/>
</dbReference>
<dbReference type="GO" id="GO:0003723">
    <property type="term" value="F:RNA binding"/>
    <property type="evidence" value="ECO:0007669"/>
    <property type="project" value="InterPro"/>
</dbReference>
<dbReference type="GO" id="GO:0003743">
    <property type="term" value="F:translation initiation factor activity"/>
    <property type="evidence" value="ECO:0000318"/>
    <property type="project" value="GO_Central"/>
</dbReference>
<dbReference type="GO" id="GO:0006413">
    <property type="term" value="P:translational initiation"/>
    <property type="evidence" value="ECO:0000318"/>
    <property type="project" value="GO_Central"/>
</dbReference>
<dbReference type="CDD" id="cd05793">
    <property type="entry name" value="S1_IF1A"/>
    <property type="match status" value="1"/>
</dbReference>
<dbReference type="Gene3D" id="2.40.50.140">
    <property type="entry name" value="Nucleic acid-binding proteins"/>
    <property type="match status" value="1"/>
</dbReference>
<dbReference type="HAMAP" id="MF_00216">
    <property type="entry name" value="aIF_1A"/>
    <property type="match status" value="1"/>
</dbReference>
<dbReference type="InterPro" id="IPR012340">
    <property type="entry name" value="NA-bd_OB-fold"/>
</dbReference>
<dbReference type="InterPro" id="IPR006196">
    <property type="entry name" value="RNA-binding_domain_S1_IF1"/>
</dbReference>
<dbReference type="InterPro" id="IPR001253">
    <property type="entry name" value="TIF_eIF-1A"/>
</dbReference>
<dbReference type="InterPro" id="IPR018104">
    <property type="entry name" value="TIF_eIF-1A_CS"/>
</dbReference>
<dbReference type="NCBIfam" id="TIGR00523">
    <property type="entry name" value="eIF-1A"/>
    <property type="match status" value="1"/>
</dbReference>
<dbReference type="NCBIfam" id="NF003084">
    <property type="entry name" value="PRK04012.1-3"/>
    <property type="match status" value="1"/>
</dbReference>
<dbReference type="NCBIfam" id="NF003085">
    <property type="entry name" value="PRK04012.1-5"/>
    <property type="match status" value="1"/>
</dbReference>
<dbReference type="PANTHER" id="PTHR21668">
    <property type="entry name" value="EIF-1A"/>
    <property type="match status" value="1"/>
</dbReference>
<dbReference type="Pfam" id="PF01176">
    <property type="entry name" value="eIF-1a"/>
    <property type="match status" value="1"/>
</dbReference>
<dbReference type="SMART" id="SM00652">
    <property type="entry name" value="eIF1a"/>
    <property type="match status" value="1"/>
</dbReference>
<dbReference type="SUPFAM" id="SSF50249">
    <property type="entry name" value="Nucleic acid-binding proteins"/>
    <property type="match status" value="1"/>
</dbReference>
<dbReference type="PROSITE" id="PS01262">
    <property type="entry name" value="IF1A"/>
    <property type="match status" value="1"/>
</dbReference>
<dbReference type="PROSITE" id="PS50832">
    <property type="entry name" value="S1_IF1_TYPE"/>
    <property type="match status" value="1"/>
</dbReference>
<organism>
    <name type="scientific">Methanosarcina acetivorans (strain ATCC 35395 / DSM 2834 / JCM 12185 / C2A)</name>
    <dbReference type="NCBI Taxonomy" id="188937"/>
    <lineage>
        <taxon>Archaea</taxon>
        <taxon>Methanobacteriati</taxon>
        <taxon>Methanobacteriota</taxon>
        <taxon>Stenosarchaea group</taxon>
        <taxon>Methanomicrobia</taxon>
        <taxon>Methanosarcinales</taxon>
        <taxon>Methanosarcinaceae</taxon>
        <taxon>Methanosarcina</taxon>
    </lineage>
</organism>
<comment type="function">
    <text evidence="1">Seems to be required for maximal rate of protein biosynthesis. Enhances ribosome dissociation into subunits and stabilizes the binding of the initiator Met-tRNA(I) to 40 S ribosomal subunits (By similarity).</text>
</comment>
<comment type="similarity">
    <text evidence="3">Belongs to the eIF-1A family.</text>
</comment>
<name>IF1A1_METAC</name>
<reference key="1">
    <citation type="journal article" date="2002" name="Genome Res.">
        <title>The genome of Methanosarcina acetivorans reveals extensive metabolic and physiological diversity.</title>
        <authorList>
            <person name="Galagan J.E."/>
            <person name="Nusbaum C."/>
            <person name="Roy A."/>
            <person name="Endrizzi M.G."/>
            <person name="Macdonald P."/>
            <person name="FitzHugh W."/>
            <person name="Calvo S."/>
            <person name="Engels R."/>
            <person name="Smirnov S."/>
            <person name="Atnoor D."/>
            <person name="Brown A."/>
            <person name="Allen N."/>
            <person name="Naylor J."/>
            <person name="Stange-Thomann N."/>
            <person name="DeArellano K."/>
            <person name="Johnson R."/>
            <person name="Linton L."/>
            <person name="McEwan P."/>
            <person name="McKernan K."/>
            <person name="Talamas J."/>
            <person name="Tirrell A."/>
            <person name="Ye W."/>
            <person name="Zimmer A."/>
            <person name="Barber R.D."/>
            <person name="Cann I."/>
            <person name="Graham D.E."/>
            <person name="Grahame D.A."/>
            <person name="Guss A.M."/>
            <person name="Hedderich R."/>
            <person name="Ingram-Smith C."/>
            <person name="Kuettner H.C."/>
            <person name="Krzycki J.A."/>
            <person name="Leigh J.A."/>
            <person name="Li W."/>
            <person name="Liu J."/>
            <person name="Mukhopadhyay B."/>
            <person name="Reeve J.N."/>
            <person name="Smith K."/>
            <person name="Springer T.A."/>
            <person name="Umayam L.A."/>
            <person name="White O."/>
            <person name="White R.H."/>
            <person name="de Macario E.C."/>
            <person name="Ferry J.G."/>
            <person name="Jarrell K.F."/>
            <person name="Jing H."/>
            <person name="Macario A.J.L."/>
            <person name="Paulsen I.T."/>
            <person name="Pritchett M."/>
            <person name="Sowers K.R."/>
            <person name="Swanson R.V."/>
            <person name="Zinder S.H."/>
            <person name="Lander E."/>
            <person name="Metcalf W.W."/>
            <person name="Birren B."/>
        </authorList>
    </citation>
    <scope>NUCLEOTIDE SEQUENCE [LARGE SCALE GENOMIC DNA]</scope>
    <source>
        <strain>ATCC 35395 / DSM 2834 / JCM 12185 / C2A</strain>
    </source>
</reference>
<accession>Q8TSA3</accession>
<evidence type="ECO:0000250" key="1"/>
<evidence type="ECO:0000256" key="2">
    <source>
        <dbReference type="SAM" id="MobiDB-lite"/>
    </source>
</evidence>
<evidence type="ECO:0000305" key="3"/>
<keyword id="KW-0396">Initiation factor</keyword>
<keyword id="KW-0648">Protein biosynthesis</keyword>
<keyword id="KW-1185">Reference proteome</keyword>
<protein>
    <recommendedName>
        <fullName>Translation initiation factor 1A 1</fullName>
        <shortName>aIF-1A 1</shortName>
    </recommendedName>
</protein>